<organism>
    <name type="scientific">Arabidopsis thaliana</name>
    <name type="common">Mouse-ear cress</name>
    <dbReference type="NCBI Taxonomy" id="3702"/>
    <lineage>
        <taxon>Eukaryota</taxon>
        <taxon>Viridiplantae</taxon>
        <taxon>Streptophyta</taxon>
        <taxon>Embryophyta</taxon>
        <taxon>Tracheophyta</taxon>
        <taxon>Spermatophyta</taxon>
        <taxon>Magnoliopsida</taxon>
        <taxon>eudicotyledons</taxon>
        <taxon>Gunneridae</taxon>
        <taxon>Pentapetalae</taxon>
        <taxon>rosids</taxon>
        <taxon>malvids</taxon>
        <taxon>Brassicales</taxon>
        <taxon>Brassicaceae</taxon>
        <taxon>Camelineae</taxon>
        <taxon>Arabidopsis</taxon>
    </lineage>
</organism>
<gene>
    <name evidence="4" type="primary">SEC23C</name>
    <name evidence="3" type="synonym">SEC23D</name>
    <name evidence="6" type="ordered locus">At2g21630</name>
    <name evidence="7" type="ORF">F2G1.10</name>
</gene>
<proteinExistence type="evidence at transcript level"/>
<protein>
    <recommendedName>
        <fullName evidence="4">Protein transport protein SEC23 C</fullName>
        <shortName evidence="4">AtSEC23C</shortName>
    </recommendedName>
    <alternativeName>
        <fullName evidence="3">Protein transport protein SEC23 D</fullName>
        <shortName evidence="3">AtSEC23D</shortName>
    </alternativeName>
</protein>
<reference key="1">
    <citation type="journal article" date="1999" name="Nature">
        <title>Sequence and analysis of chromosome 2 of the plant Arabidopsis thaliana.</title>
        <authorList>
            <person name="Lin X."/>
            <person name="Kaul S."/>
            <person name="Rounsley S.D."/>
            <person name="Shea T.P."/>
            <person name="Benito M.-I."/>
            <person name="Town C.D."/>
            <person name="Fujii C.Y."/>
            <person name="Mason T.M."/>
            <person name="Bowman C.L."/>
            <person name="Barnstead M.E."/>
            <person name="Feldblyum T.V."/>
            <person name="Buell C.R."/>
            <person name="Ketchum K.A."/>
            <person name="Lee J.J."/>
            <person name="Ronning C.M."/>
            <person name="Koo H.L."/>
            <person name="Moffat K.S."/>
            <person name="Cronin L.A."/>
            <person name="Shen M."/>
            <person name="Pai G."/>
            <person name="Van Aken S."/>
            <person name="Umayam L."/>
            <person name="Tallon L.J."/>
            <person name="Gill J.E."/>
            <person name="Adams M.D."/>
            <person name="Carrera A.J."/>
            <person name="Creasy T.H."/>
            <person name="Goodman H.M."/>
            <person name="Somerville C.R."/>
            <person name="Copenhaver G.P."/>
            <person name="Preuss D."/>
            <person name="Nierman W.C."/>
            <person name="White O."/>
            <person name="Eisen J.A."/>
            <person name="Salzberg S.L."/>
            <person name="Fraser C.M."/>
            <person name="Venter J.C."/>
        </authorList>
    </citation>
    <scope>NUCLEOTIDE SEQUENCE [LARGE SCALE GENOMIC DNA]</scope>
    <source>
        <strain>cv. Columbia</strain>
    </source>
</reference>
<reference key="2">
    <citation type="journal article" date="2017" name="Plant J.">
        <title>Araport11: a complete reannotation of the Arabidopsis thaliana reference genome.</title>
        <authorList>
            <person name="Cheng C.Y."/>
            <person name="Krishnakumar V."/>
            <person name="Chan A.P."/>
            <person name="Thibaud-Nissen F."/>
            <person name="Schobel S."/>
            <person name="Town C.D."/>
        </authorList>
    </citation>
    <scope>GENOME REANNOTATION</scope>
    <source>
        <strain>cv. Columbia</strain>
    </source>
</reference>
<reference key="3">
    <citation type="journal article" date="2003" name="Science">
        <title>Empirical analysis of transcriptional activity in the Arabidopsis genome.</title>
        <authorList>
            <person name="Yamada K."/>
            <person name="Lim J."/>
            <person name="Dale J.M."/>
            <person name="Chen H."/>
            <person name="Shinn P."/>
            <person name="Palm C.J."/>
            <person name="Southwick A.M."/>
            <person name="Wu H.C."/>
            <person name="Kim C.J."/>
            <person name="Nguyen M."/>
            <person name="Pham P.K."/>
            <person name="Cheuk R.F."/>
            <person name="Karlin-Newmann G."/>
            <person name="Liu S.X."/>
            <person name="Lam B."/>
            <person name="Sakano H."/>
            <person name="Wu T."/>
            <person name="Yu G."/>
            <person name="Miranda M."/>
            <person name="Quach H.L."/>
            <person name="Tripp M."/>
            <person name="Chang C.H."/>
            <person name="Lee J.M."/>
            <person name="Toriumi M.J."/>
            <person name="Chan M.M."/>
            <person name="Tang C.C."/>
            <person name="Onodera C.S."/>
            <person name="Deng J.M."/>
            <person name="Akiyama K."/>
            <person name="Ansari Y."/>
            <person name="Arakawa T."/>
            <person name="Banh J."/>
            <person name="Banno F."/>
            <person name="Bowser L."/>
            <person name="Brooks S.Y."/>
            <person name="Carninci P."/>
            <person name="Chao Q."/>
            <person name="Choy N."/>
            <person name="Enju A."/>
            <person name="Goldsmith A.D."/>
            <person name="Gurjal M."/>
            <person name="Hansen N.F."/>
            <person name="Hayashizaki Y."/>
            <person name="Johnson-Hopson C."/>
            <person name="Hsuan V.W."/>
            <person name="Iida K."/>
            <person name="Karnes M."/>
            <person name="Khan S."/>
            <person name="Koesema E."/>
            <person name="Ishida J."/>
            <person name="Jiang P.X."/>
            <person name="Jones T."/>
            <person name="Kawai J."/>
            <person name="Kamiya A."/>
            <person name="Meyers C."/>
            <person name="Nakajima M."/>
            <person name="Narusaka M."/>
            <person name="Seki M."/>
            <person name="Sakurai T."/>
            <person name="Satou M."/>
            <person name="Tamse R."/>
            <person name="Vaysberg M."/>
            <person name="Wallender E.K."/>
            <person name="Wong C."/>
            <person name="Yamamura Y."/>
            <person name="Yuan S."/>
            <person name="Shinozaki K."/>
            <person name="Davis R.W."/>
            <person name="Theologis A."/>
            <person name="Ecker J.R."/>
        </authorList>
    </citation>
    <scope>NUCLEOTIDE SEQUENCE [LARGE SCALE MRNA]</scope>
    <source>
        <strain>cv. Columbia</strain>
    </source>
</reference>
<reference key="4">
    <citation type="journal article" date="2014" name="PLoS ONE">
        <title>Study of the plant COPII vesicle coat subunits by functional complementation of yeast Saccharomyces cerevisiae mutants.</title>
        <authorList>
            <person name="De Craene J.-O."/>
            <person name="Courte F."/>
            <person name="Rinaldi B."/>
            <person name="Fitterer C."/>
            <person name="Herranz M.C."/>
            <person name="Schmitt-Keichinger C."/>
            <person name="Ritzenthaler C."/>
            <person name="Friant S."/>
        </authorList>
    </citation>
    <scope>GENE FAMILY</scope>
    <source>
        <strain>cv. Columbia</strain>
    </source>
</reference>
<reference key="5">
    <citation type="journal article" date="2016" name="Trends Plant Sci.">
        <title>COPII paralogs in plants: functional redundancy or diversity?</title>
        <authorList>
            <person name="Chung K.P."/>
            <person name="Zeng Y."/>
            <person name="Jiang L."/>
        </authorList>
    </citation>
    <scope>REVIEW ON COAT PROTEIN COMPLEX II (COPII) VESICLES</scope>
    <scope>GENE FAMILY</scope>
    <scope>NOMENCLATURE</scope>
</reference>
<dbReference type="EMBL" id="AC007119">
    <property type="protein sequence ID" value="AAD23642.1"/>
    <property type="molecule type" value="Genomic_DNA"/>
</dbReference>
<dbReference type="EMBL" id="CP002685">
    <property type="protein sequence ID" value="AEC07205.1"/>
    <property type="molecule type" value="Genomic_DNA"/>
</dbReference>
<dbReference type="EMBL" id="AY099755">
    <property type="protein sequence ID" value="AAM20606.1"/>
    <property type="molecule type" value="mRNA"/>
</dbReference>
<dbReference type="EMBL" id="BT010345">
    <property type="protein sequence ID" value="AAQ56788.1"/>
    <property type="molecule type" value="mRNA"/>
</dbReference>
<dbReference type="PIR" id="E84603">
    <property type="entry name" value="E84603"/>
</dbReference>
<dbReference type="RefSeq" id="NP_179757.1">
    <property type="nucleotide sequence ID" value="NM_127734.3"/>
</dbReference>
<dbReference type="SMR" id="Q9SIJ7"/>
<dbReference type="FunCoup" id="Q9SIJ7">
    <property type="interactions" value="3783"/>
</dbReference>
<dbReference type="STRING" id="3702.Q9SIJ7"/>
<dbReference type="PaxDb" id="3702-AT2G21630.1"/>
<dbReference type="ProteomicsDB" id="179726"/>
<dbReference type="EnsemblPlants" id="AT2G21630.1">
    <property type="protein sequence ID" value="AT2G21630.1"/>
    <property type="gene ID" value="AT2G21630"/>
</dbReference>
<dbReference type="GeneID" id="816701"/>
<dbReference type="Gramene" id="AT2G21630.1">
    <property type="protein sequence ID" value="AT2G21630.1"/>
    <property type="gene ID" value="AT2G21630"/>
</dbReference>
<dbReference type="KEGG" id="ath:AT2G21630"/>
<dbReference type="Araport" id="AT2G21630"/>
<dbReference type="TAIR" id="AT2G21630">
    <property type="gene designation" value="ATSEC23C"/>
</dbReference>
<dbReference type="eggNOG" id="KOG1986">
    <property type="taxonomic scope" value="Eukaryota"/>
</dbReference>
<dbReference type="HOGENOM" id="CLU_008658_3_0_1"/>
<dbReference type="InParanoid" id="Q9SIJ7"/>
<dbReference type="OMA" id="MPWNIIP"/>
<dbReference type="PRO" id="PR:Q9SIJ7"/>
<dbReference type="Proteomes" id="UP000006548">
    <property type="component" value="Chromosome 2"/>
</dbReference>
<dbReference type="ExpressionAtlas" id="Q9SIJ7">
    <property type="expression patterns" value="baseline and differential"/>
</dbReference>
<dbReference type="GO" id="GO:0030127">
    <property type="term" value="C:COPII vesicle coat"/>
    <property type="evidence" value="ECO:0007669"/>
    <property type="project" value="InterPro"/>
</dbReference>
<dbReference type="GO" id="GO:0005789">
    <property type="term" value="C:endoplasmic reticulum membrane"/>
    <property type="evidence" value="ECO:0007669"/>
    <property type="project" value="UniProtKB-SubCell"/>
</dbReference>
<dbReference type="GO" id="GO:0008270">
    <property type="term" value="F:zinc ion binding"/>
    <property type="evidence" value="ECO:0007669"/>
    <property type="project" value="InterPro"/>
</dbReference>
<dbReference type="GO" id="GO:0090114">
    <property type="term" value="P:COPII-coated vesicle budding"/>
    <property type="evidence" value="ECO:0007669"/>
    <property type="project" value="InterPro"/>
</dbReference>
<dbReference type="GO" id="GO:0006886">
    <property type="term" value="P:intracellular protein transport"/>
    <property type="evidence" value="ECO:0007669"/>
    <property type="project" value="InterPro"/>
</dbReference>
<dbReference type="CDD" id="cd01478">
    <property type="entry name" value="Sec23-like"/>
    <property type="match status" value="1"/>
</dbReference>
<dbReference type="CDD" id="cd11287">
    <property type="entry name" value="Sec23_C"/>
    <property type="match status" value="1"/>
</dbReference>
<dbReference type="FunFam" id="1.20.120.730:FF:000005">
    <property type="entry name" value="Protein transport protein SEC23"/>
    <property type="match status" value="1"/>
</dbReference>
<dbReference type="FunFam" id="2.30.30.380:FF:000001">
    <property type="entry name" value="Protein transport protein SEC23"/>
    <property type="match status" value="1"/>
</dbReference>
<dbReference type="FunFam" id="2.60.40.1670:FF:000006">
    <property type="entry name" value="Protein transport protein SEC23"/>
    <property type="match status" value="1"/>
</dbReference>
<dbReference type="FunFam" id="3.40.20.10:FF:000014">
    <property type="entry name" value="Protein transport protein SEC23"/>
    <property type="match status" value="1"/>
</dbReference>
<dbReference type="FunFam" id="3.40.50.410:FF:000008">
    <property type="entry name" value="Protein transport protein SEC23"/>
    <property type="match status" value="1"/>
</dbReference>
<dbReference type="Gene3D" id="2.60.40.1670">
    <property type="entry name" value="beta-sandwich domain of Sec23/24"/>
    <property type="match status" value="1"/>
</dbReference>
<dbReference type="Gene3D" id="1.20.120.730">
    <property type="entry name" value="Sec23/Sec24 helical domain"/>
    <property type="match status" value="1"/>
</dbReference>
<dbReference type="Gene3D" id="3.40.20.10">
    <property type="entry name" value="Severin"/>
    <property type="match status" value="1"/>
</dbReference>
<dbReference type="Gene3D" id="3.40.50.410">
    <property type="entry name" value="von Willebrand factor, type A domain"/>
    <property type="match status" value="1"/>
</dbReference>
<dbReference type="Gene3D" id="2.30.30.380">
    <property type="entry name" value="Zn-finger domain of Sec23/24"/>
    <property type="match status" value="1"/>
</dbReference>
<dbReference type="InterPro" id="IPR029006">
    <property type="entry name" value="ADF-H/Gelsolin-like_dom_sf"/>
</dbReference>
<dbReference type="InterPro" id="IPR007123">
    <property type="entry name" value="Gelsolin-like_dom"/>
</dbReference>
<dbReference type="InterPro" id="IPR036180">
    <property type="entry name" value="Gelsolin-like_dom_sf"/>
</dbReference>
<dbReference type="InterPro" id="IPR037364">
    <property type="entry name" value="Sec23"/>
</dbReference>
<dbReference type="InterPro" id="IPR006900">
    <property type="entry name" value="Sec23/24_helical_dom"/>
</dbReference>
<dbReference type="InterPro" id="IPR036175">
    <property type="entry name" value="Sec23/24_helical_dom_sf"/>
</dbReference>
<dbReference type="InterPro" id="IPR006896">
    <property type="entry name" value="Sec23/24_trunk_dom"/>
</dbReference>
<dbReference type="InterPro" id="IPR012990">
    <property type="entry name" value="Sec23_24_beta_S"/>
</dbReference>
<dbReference type="InterPro" id="IPR037550">
    <property type="entry name" value="Sec23_C"/>
</dbReference>
<dbReference type="InterPro" id="IPR036465">
    <property type="entry name" value="vWFA_dom_sf"/>
</dbReference>
<dbReference type="InterPro" id="IPR006895">
    <property type="entry name" value="Znf_Sec23_Sec24"/>
</dbReference>
<dbReference type="InterPro" id="IPR036174">
    <property type="entry name" value="Znf_Sec23_Sec24_sf"/>
</dbReference>
<dbReference type="PANTHER" id="PTHR11141">
    <property type="entry name" value="PROTEIN TRANSPORT PROTEIN SEC23"/>
    <property type="match status" value="1"/>
</dbReference>
<dbReference type="PANTHER" id="PTHR11141:SF2">
    <property type="entry name" value="PROTEIN TRANSPORT PROTEIN SEC23 C"/>
    <property type="match status" value="1"/>
</dbReference>
<dbReference type="Pfam" id="PF00626">
    <property type="entry name" value="Gelsolin"/>
    <property type="match status" value="1"/>
</dbReference>
<dbReference type="Pfam" id="PF08033">
    <property type="entry name" value="Sec23_BS"/>
    <property type="match status" value="1"/>
</dbReference>
<dbReference type="Pfam" id="PF04815">
    <property type="entry name" value="Sec23_helical"/>
    <property type="match status" value="1"/>
</dbReference>
<dbReference type="Pfam" id="PF04811">
    <property type="entry name" value="Sec23_trunk"/>
    <property type="match status" value="1"/>
</dbReference>
<dbReference type="Pfam" id="PF04810">
    <property type="entry name" value="zf-Sec23_Sec24"/>
    <property type="match status" value="1"/>
</dbReference>
<dbReference type="SUPFAM" id="SSF81995">
    <property type="entry name" value="beta-sandwich domain of Sec23/24"/>
    <property type="match status" value="1"/>
</dbReference>
<dbReference type="SUPFAM" id="SSF82754">
    <property type="entry name" value="C-terminal, gelsolin-like domain of Sec23/24"/>
    <property type="match status" value="1"/>
</dbReference>
<dbReference type="SUPFAM" id="SSF81811">
    <property type="entry name" value="Helical domain of Sec23/24"/>
    <property type="match status" value="1"/>
</dbReference>
<dbReference type="SUPFAM" id="SSF53300">
    <property type="entry name" value="vWA-like"/>
    <property type="match status" value="1"/>
</dbReference>
<dbReference type="SUPFAM" id="SSF82919">
    <property type="entry name" value="Zn-finger domain of Sec23/24"/>
    <property type="match status" value="1"/>
</dbReference>
<accession>Q9SIJ7</accession>
<evidence type="ECO:0000250" key="1">
    <source>
        <dbReference type="UniProtKB" id="O95486"/>
    </source>
</evidence>
<evidence type="ECO:0000250" key="2">
    <source>
        <dbReference type="UniProtKB" id="P15303"/>
    </source>
</evidence>
<evidence type="ECO:0000303" key="3">
    <source>
    </source>
</evidence>
<evidence type="ECO:0000303" key="4">
    <source>
    </source>
</evidence>
<evidence type="ECO:0000305" key="5"/>
<evidence type="ECO:0000312" key="6">
    <source>
        <dbReference type="Araport" id="AT2G21630"/>
    </source>
</evidence>
<evidence type="ECO:0000312" key="7">
    <source>
        <dbReference type="EMBL" id="AEC07205.1"/>
    </source>
</evidence>
<keyword id="KW-0968">Cytoplasmic vesicle</keyword>
<keyword id="KW-0256">Endoplasmic reticulum</keyword>
<keyword id="KW-0931">ER-Golgi transport</keyword>
<keyword id="KW-0472">Membrane</keyword>
<keyword id="KW-0479">Metal-binding</keyword>
<keyword id="KW-0653">Protein transport</keyword>
<keyword id="KW-1185">Reference proteome</keyword>
<keyword id="KW-0813">Transport</keyword>
<keyword id="KW-0862">Zinc</keyword>
<feature type="chain" id="PRO_0000457103" description="Protein transport protein SEC23 C">
    <location>
        <begin position="1"/>
        <end position="761"/>
    </location>
</feature>
<feature type="region of interest" description="Zinc finger-like" evidence="1">
    <location>
        <begin position="60"/>
        <end position="85"/>
    </location>
</feature>
<feature type="binding site" evidence="2">
    <location>
        <position position="60"/>
    </location>
    <ligand>
        <name>Zn(2+)</name>
        <dbReference type="ChEBI" id="CHEBI:29105"/>
    </ligand>
</feature>
<feature type="binding site" evidence="2">
    <location>
        <position position="63"/>
    </location>
    <ligand>
        <name>Zn(2+)</name>
        <dbReference type="ChEBI" id="CHEBI:29105"/>
    </ligand>
</feature>
<feature type="binding site" evidence="2">
    <location>
        <position position="82"/>
    </location>
    <ligand>
        <name>Zn(2+)</name>
        <dbReference type="ChEBI" id="CHEBI:29105"/>
    </ligand>
</feature>
<feature type="binding site" evidence="2">
    <location>
        <position position="85"/>
    </location>
    <ligand>
        <name>Zn(2+)</name>
        <dbReference type="ChEBI" id="CHEBI:29105"/>
    </ligand>
</feature>
<comment type="function">
    <text evidence="2">Component of the coat protein complex II (COPII) which promotes the formation of transport vesicles from the endoplasmic reticulum (ER) (By similarity). The coat has two main functions, the physical deformation of the endoplasmic reticulum membrane into vesicles and the selection of cargo molecules (By similarity).</text>
</comment>
<comment type="subunit">
    <text evidence="1">Component of the coat protein complex II (COPII), composed of at least five proteins: the Sec23/24 complex, the Sec13/31 complex and Sar1.</text>
</comment>
<comment type="subcellular location">
    <subcellularLocation>
        <location evidence="2">Cytoplasmic vesicle</location>
        <location evidence="2">COPII-coated vesicle membrane</location>
        <topology evidence="2">Peripheral membrane protein</topology>
        <orientation evidence="2">Cytoplasmic side</orientation>
    </subcellularLocation>
    <subcellularLocation>
        <location evidence="2">Endoplasmic reticulum membrane</location>
        <topology evidence="2">Peripheral membrane protein</topology>
        <orientation evidence="2">Cytoplasmic side</orientation>
    </subcellularLocation>
    <subcellularLocation>
        <location evidence="2">Membrane</location>
        <topology evidence="2">Peripheral membrane protein</topology>
        <orientation evidence="2">Cytoplasmic side</orientation>
    </subcellularLocation>
</comment>
<comment type="similarity">
    <text evidence="5">Belongs to the SEC23/SEC24 family. SEC24 subfamily.</text>
</comment>
<sequence>MAEFGELEAQDGVRMPWNIIPVATKKEQSIDSEVPVSAIYTPLKPLRSQSLLLPYSPLRCRTCRSVLNPYSVVDFSACNWGCPFCFNRNPFPLNYSSVADNNLPPELFPHSTTVEYLCDSFSSPSPPVFLFVVDTCLISEELDFLKSSLFQALDLLPDTSILGLITFDSLVRVYELGFPHCTKSYFFHGNKDCTKDQLLDQLSFFVKNPKPSSGVIAGARDGLSSDDIARFLLPASDCHFTLHSVLEELGNSPWPVAADHRPARCTGVALRIAASLLGACFPGSAARIMAFIGGPSTQGPGAIVSRELSDPIRSHKDIDKDSAMYYHKAVEFYEMLAKQLVHQGHVLDVFASSVDQVGIAELKVAVEQTGGFVVLAESFGHSVFRDSLKRVCQSGENDLGLSSCGIFEINCSKDIKVQGIIGPCASLEKKGPLCSDTAIGQGHTSAWKMCGLDNNTSICLVFEIAKIDTADVVLQSQSNQFYFQFLTYYQHSNGQTRLRVTTLSRRWVMGTESLQELSNGFDQEAAAVVMARLISSKMETQPEFNPQRWVDKALINLCTWFGDYQKGNPSSFSLSSQLSIFPQFVFHLRRSQFVQVFNNSPDETAYFRMILYRENVSNSVVMIQPSLISFSFHSPPEPILLDVASIAADRILLLDSYFTLVIFHGSTIAQWRKAGYHNQPEHQAFGHLLQSPRDYADTIMSERFPTPRLVICDQYGSQARFLLAKLNPCDGDAHFSGQSNVFTDDVSLSVFLDHLRRLIVH</sequence>
<name>SC23C_ARATH</name>